<protein>
    <recommendedName>
        <fullName evidence="2">Serine/threonine-protein kinase ATG1</fullName>
        <ecNumber evidence="2">2.7.11.1</ecNumber>
    </recommendedName>
    <alternativeName>
        <fullName evidence="2">Autophagy-related protein 1</fullName>
    </alternativeName>
</protein>
<dbReference type="EC" id="2.7.11.1" evidence="2"/>
<dbReference type="EMBL" id="AAFW02000099">
    <property type="protein sequence ID" value="EDN61945.1"/>
    <property type="molecule type" value="Genomic_DNA"/>
</dbReference>
<dbReference type="SMR" id="A6ZU07"/>
<dbReference type="HOGENOM" id="CLU_006447_0_0_1"/>
<dbReference type="Proteomes" id="UP000007060">
    <property type="component" value="Unassembled WGS sequence"/>
</dbReference>
<dbReference type="GO" id="GO:0005776">
    <property type="term" value="C:autophagosome"/>
    <property type="evidence" value="ECO:0007669"/>
    <property type="project" value="TreeGrafter"/>
</dbReference>
<dbReference type="GO" id="GO:0005829">
    <property type="term" value="C:cytosol"/>
    <property type="evidence" value="ECO:0007669"/>
    <property type="project" value="TreeGrafter"/>
</dbReference>
<dbReference type="GO" id="GO:0034045">
    <property type="term" value="C:phagophore assembly site membrane"/>
    <property type="evidence" value="ECO:0007669"/>
    <property type="project" value="UniProtKB-SubCell"/>
</dbReference>
<dbReference type="GO" id="GO:0005524">
    <property type="term" value="F:ATP binding"/>
    <property type="evidence" value="ECO:0007669"/>
    <property type="project" value="UniProtKB-KW"/>
</dbReference>
<dbReference type="GO" id="GO:0106310">
    <property type="term" value="F:protein serine kinase activity"/>
    <property type="evidence" value="ECO:0007669"/>
    <property type="project" value="RHEA"/>
</dbReference>
<dbReference type="GO" id="GO:0004674">
    <property type="term" value="F:protein serine/threonine kinase activity"/>
    <property type="evidence" value="ECO:0007669"/>
    <property type="project" value="UniProtKB-KW"/>
</dbReference>
<dbReference type="GO" id="GO:0000045">
    <property type="term" value="P:autophagosome assembly"/>
    <property type="evidence" value="ECO:0007669"/>
    <property type="project" value="TreeGrafter"/>
</dbReference>
<dbReference type="GO" id="GO:0000422">
    <property type="term" value="P:autophagy of mitochondrion"/>
    <property type="evidence" value="ECO:0007669"/>
    <property type="project" value="TreeGrafter"/>
</dbReference>
<dbReference type="GO" id="GO:0034727">
    <property type="term" value="P:piecemeal microautophagy of the nucleus"/>
    <property type="evidence" value="ECO:0007669"/>
    <property type="project" value="TreeGrafter"/>
</dbReference>
<dbReference type="GO" id="GO:0015031">
    <property type="term" value="P:protein transport"/>
    <property type="evidence" value="ECO:0007669"/>
    <property type="project" value="UniProtKB-KW"/>
</dbReference>
<dbReference type="GO" id="GO:0010506">
    <property type="term" value="P:regulation of autophagy"/>
    <property type="evidence" value="ECO:0007669"/>
    <property type="project" value="InterPro"/>
</dbReference>
<dbReference type="GO" id="GO:0042594">
    <property type="term" value="P:response to starvation"/>
    <property type="evidence" value="ECO:0007669"/>
    <property type="project" value="TreeGrafter"/>
</dbReference>
<dbReference type="GO" id="GO:0061709">
    <property type="term" value="P:reticulophagy"/>
    <property type="evidence" value="ECO:0007669"/>
    <property type="project" value="TreeGrafter"/>
</dbReference>
<dbReference type="CDD" id="cd14009">
    <property type="entry name" value="STKc_ATG1_ULK_like"/>
    <property type="match status" value="1"/>
</dbReference>
<dbReference type="FunFam" id="1.10.510.10:FF:000817">
    <property type="entry name" value="Serine/threonine-protein kinase ATG1"/>
    <property type="match status" value="1"/>
</dbReference>
<dbReference type="FunFam" id="3.30.200.20:FF:000399">
    <property type="entry name" value="Serine/threonine-protein kinase atg1"/>
    <property type="match status" value="1"/>
</dbReference>
<dbReference type="Gene3D" id="3.30.200.20">
    <property type="entry name" value="Phosphorylase Kinase, domain 1"/>
    <property type="match status" value="1"/>
</dbReference>
<dbReference type="Gene3D" id="1.10.510.10">
    <property type="entry name" value="Transferase(Phosphotransferase) domain 1"/>
    <property type="match status" value="1"/>
</dbReference>
<dbReference type="InterPro" id="IPR045269">
    <property type="entry name" value="Atg1-like"/>
</dbReference>
<dbReference type="InterPro" id="IPR048941">
    <property type="entry name" value="ATG1-like_MIT2"/>
</dbReference>
<dbReference type="InterPro" id="IPR022708">
    <property type="entry name" value="Atg1-like_tMIT"/>
</dbReference>
<dbReference type="InterPro" id="IPR011009">
    <property type="entry name" value="Kinase-like_dom_sf"/>
</dbReference>
<dbReference type="InterPro" id="IPR000719">
    <property type="entry name" value="Prot_kinase_dom"/>
</dbReference>
<dbReference type="InterPro" id="IPR017441">
    <property type="entry name" value="Protein_kinase_ATP_BS"/>
</dbReference>
<dbReference type="InterPro" id="IPR008271">
    <property type="entry name" value="Ser/Thr_kinase_AS"/>
</dbReference>
<dbReference type="PANTHER" id="PTHR24348:SF22">
    <property type="entry name" value="NON-SPECIFIC SERINE_THREONINE PROTEIN KINASE"/>
    <property type="match status" value="1"/>
</dbReference>
<dbReference type="PANTHER" id="PTHR24348">
    <property type="entry name" value="SERINE/THREONINE-PROTEIN KINASE UNC-51-RELATED"/>
    <property type="match status" value="1"/>
</dbReference>
<dbReference type="Pfam" id="PF12063">
    <property type="entry name" value="ATG1-like_MIT1"/>
    <property type="match status" value="1"/>
</dbReference>
<dbReference type="Pfam" id="PF21127">
    <property type="entry name" value="ATG1-like_MIT2"/>
    <property type="match status" value="1"/>
</dbReference>
<dbReference type="Pfam" id="PF00069">
    <property type="entry name" value="Pkinase"/>
    <property type="match status" value="1"/>
</dbReference>
<dbReference type="SMART" id="SM00220">
    <property type="entry name" value="S_TKc"/>
    <property type="match status" value="1"/>
</dbReference>
<dbReference type="SUPFAM" id="SSF56112">
    <property type="entry name" value="Protein kinase-like (PK-like)"/>
    <property type="match status" value="1"/>
</dbReference>
<dbReference type="PROSITE" id="PS00107">
    <property type="entry name" value="PROTEIN_KINASE_ATP"/>
    <property type="match status" value="1"/>
</dbReference>
<dbReference type="PROSITE" id="PS50011">
    <property type="entry name" value="PROTEIN_KINASE_DOM"/>
    <property type="match status" value="1"/>
</dbReference>
<dbReference type="PROSITE" id="PS00108">
    <property type="entry name" value="PROTEIN_KINASE_ST"/>
    <property type="match status" value="1"/>
</dbReference>
<comment type="function">
    <text evidence="2">Serine/threonine protein kinase involved in the cytoplasm to vacuole transport (Cvt) and found to be essential in autophagy, where it is required for the formation of autophagosomes. Involved in the clearance of protein aggregates which cannot be efficiently cleared by the proteasome. Required for selective autophagic degradation of the nucleus (nucleophagy) as well as for mitophagy which contributes to regulate mitochondrial quantity and quality by eliminating the mitochondria to a basal level to fulfill cellular energy requirements and preventing excess ROS production. Also involved in endoplasmic reticulum-specific autophagic process, in selective removal of ER-associated degradation (ERAD) substrates. Plays a key role in ATG9 and ATG23 cycling through the pre-autophagosomal structure and is necessary to promote ATG18 binding to ATG9 through phosphorylation of ATG9. Catalyzes phosphorylation of ATG4, decreasing the interaction between ATG4 and ATG8 and impairing deconjugation of PE-conjugated forms of ATG8. Finally, ATG1 is also required for the maintenance of cell viability under starvation and for glycogen storage during stationary phase. Plays a role in genome stability through suppression of abnormal mitosis under starvation, and in regulation of filamentous growth.</text>
</comment>
<comment type="catalytic activity">
    <reaction evidence="2">
        <text>L-seryl-[protein] + ATP = O-phospho-L-seryl-[protein] + ADP + H(+)</text>
        <dbReference type="Rhea" id="RHEA:17989"/>
        <dbReference type="Rhea" id="RHEA-COMP:9863"/>
        <dbReference type="Rhea" id="RHEA-COMP:11604"/>
        <dbReference type="ChEBI" id="CHEBI:15378"/>
        <dbReference type="ChEBI" id="CHEBI:29999"/>
        <dbReference type="ChEBI" id="CHEBI:30616"/>
        <dbReference type="ChEBI" id="CHEBI:83421"/>
        <dbReference type="ChEBI" id="CHEBI:456216"/>
        <dbReference type="EC" id="2.7.11.1"/>
    </reaction>
</comment>
<comment type="catalytic activity">
    <reaction evidence="2">
        <text>L-threonyl-[protein] + ATP = O-phospho-L-threonyl-[protein] + ADP + H(+)</text>
        <dbReference type="Rhea" id="RHEA:46608"/>
        <dbReference type="Rhea" id="RHEA-COMP:11060"/>
        <dbReference type="Rhea" id="RHEA-COMP:11605"/>
        <dbReference type="ChEBI" id="CHEBI:15378"/>
        <dbReference type="ChEBI" id="CHEBI:30013"/>
        <dbReference type="ChEBI" id="CHEBI:30616"/>
        <dbReference type="ChEBI" id="CHEBI:61977"/>
        <dbReference type="ChEBI" id="CHEBI:456216"/>
        <dbReference type="EC" id="2.7.11.1"/>
    </reaction>
</comment>
<comment type="activity regulation">
    <text evidence="1">Activated by hypophosphorylated form of ATG13 (present in nitrogen starvation conditions). Also activated by autophopsphorylation of Thr-226 and inhibited by phosphorylation of Ser-34 (By similarity).</text>
</comment>
<comment type="subunit">
    <text evidence="2">Homodimer. Dimerization requires the presence of ATG13. Forms a ternary complex with ATG13 and ATG17. Also interacts with ATG11.</text>
</comment>
<comment type="subcellular location">
    <subcellularLocation>
        <location evidence="2">Cytoplasm</location>
    </subcellularLocation>
    <subcellularLocation>
        <location evidence="2">Preautophagosomal structure membrane</location>
        <topology evidence="2">Peripheral membrane protein</topology>
    </subcellularLocation>
    <text evidence="2">Formes punctate structures in starvation conditions only when ATG13 and ATG17 were both present. Localizes to both the isolation membrane (IM) and the vacuole-isolation membrane contact site (VICS) during IM expansion. The IM is a membrane sac generated from the pre-autophagosomal structure that ultimately expands to become a mature autophagosome.</text>
</comment>
<comment type="domain">
    <text evidence="2">The LIR motif is required for the interaction with ATG8 and for the association of ATG1 with autophagosomes.</text>
</comment>
<comment type="PTM">
    <text evidence="2">Autophosphorylated at Thr-226 and Ser-390. The phosphorylation state may play a role in the induction of protein degradation upon starvation. Phosphorylation at Thr-226 within the activation loop is required for protein kinase activity whereas phosphorylation at Ser-34 leads to inhibition of kinase activity. Phosphorylation of Ser-508 and Ser-515 by PKA is required to induce autophagy but not for kinase activity.</text>
</comment>
<comment type="similarity">
    <text evidence="3">Belongs to the protein kinase superfamily. Ser/Thr protein kinase family. APG1/unc-51/ULK1 subfamily.</text>
</comment>
<keyword id="KW-0067">ATP-binding</keyword>
<keyword id="KW-0072">Autophagy</keyword>
<keyword id="KW-0963">Cytoplasm</keyword>
<keyword id="KW-0418">Kinase</keyword>
<keyword id="KW-0472">Membrane</keyword>
<keyword id="KW-0547">Nucleotide-binding</keyword>
<keyword id="KW-0597">Phosphoprotein</keyword>
<keyword id="KW-0653">Protein transport</keyword>
<keyword id="KW-0723">Serine/threonine-protein kinase</keyword>
<keyword id="KW-0808">Transferase</keyword>
<keyword id="KW-0813">Transport</keyword>
<accession>A6ZU07</accession>
<name>ATG1_YEAS7</name>
<feature type="chain" id="PRO_0000317800" description="Serine/threonine-protein kinase ATG1">
    <location>
        <begin position="1"/>
        <end position="897"/>
    </location>
</feature>
<feature type="domain" description="Protein kinase" evidence="3">
    <location>
        <begin position="24"/>
        <end position="325"/>
    </location>
</feature>
<feature type="region of interest" description="Disordered" evidence="5">
    <location>
        <begin position="490"/>
        <end position="509"/>
    </location>
</feature>
<feature type="region of interest" description="Required for Cvt trafficking" evidence="1">
    <location>
        <begin position="880"/>
        <end position="886"/>
    </location>
</feature>
<feature type="short sequence motif" description="LIR" evidence="1">
    <location>
        <begin position="429"/>
        <end position="432"/>
    </location>
</feature>
<feature type="active site" description="Proton acceptor" evidence="3 4">
    <location>
        <position position="172"/>
    </location>
</feature>
<feature type="binding site" evidence="3">
    <location>
        <begin position="30"/>
        <end position="38"/>
    </location>
    <ligand>
        <name>ATP</name>
        <dbReference type="ChEBI" id="CHEBI:30616"/>
    </ligand>
</feature>
<feature type="binding site" evidence="3">
    <location>
        <position position="54"/>
    </location>
    <ligand>
        <name>ATP</name>
        <dbReference type="ChEBI" id="CHEBI:30616"/>
    </ligand>
</feature>
<feature type="modified residue" description="Phosphoserine" evidence="2">
    <location>
        <position position="34"/>
    </location>
</feature>
<feature type="modified residue" description="Phosphothreonine" evidence="2">
    <location>
        <position position="129"/>
    </location>
</feature>
<feature type="modified residue" description="Phosphothreonine; by autocatalysis" evidence="2">
    <location>
        <position position="226"/>
    </location>
</feature>
<feature type="modified residue" description="Phosphoserine" evidence="2">
    <location>
        <position position="304"/>
    </location>
</feature>
<feature type="modified residue" description="Phosphoserine" evidence="2">
    <location>
        <position position="365"/>
    </location>
</feature>
<feature type="modified residue" description="Phosphoserine" evidence="2">
    <location>
        <position position="390"/>
    </location>
</feature>
<feature type="modified residue" description="Phosphoserine; by PKA" evidence="2">
    <location>
        <position position="508"/>
    </location>
</feature>
<feature type="modified residue" description="Phosphoserine; by PKA" evidence="2">
    <location>
        <position position="515"/>
    </location>
</feature>
<feature type="modified residue" description="Phosphoserine" evidence="2">
    <location>
        <position position="533"/>
    </location>
</feature>
<feature type="modified residue" description="Phosphoserine" evidence="2">
    <location>
        <position position="551"/>
    </location>
</feature>
<feature type="modified residue" description="Phosphoserine" evidence="2">
    <location>
        <position position="552"/>
    </location>
</feature>
<feature type="modified residue" description="Phosphothreonine" evidence="2">
    <location>
        <position position="590"/>
    </location>
</feature>
<feature type="modified residue" description="Phosphoserine" evidence="2">
    <location>
        <position position="621"/>
    </location>
</feature>
<feature type="modified residue" description="Phosphoserine" evidence="2">
    <location>
        <position position="635"/>
    </location>
</feature>
<feature type="modified residue" description="Phosphoserine" evidence="2">
    <location>
        <position position="638"/>
    </location>
</feature>
<feature type="modified residue" description="Phosphoserine" evidence="2">
    <location>
        <position position="647"/>
    </location>
</feature>
<feature type="modified residue" description="Phosphoserine" evidence="2">
    <location>
        <position position="677"/>
    </location>
</feature>
<feature type="modified residue" description="Phosphoserine" evidence="2">
    <location>
        <position position="680"/>
    </location>
</feature>
<feature type="modified residue" description="Phosphoserine" evidence="2">
    <location>
        <position position="683"/>
    </location>
</feature>
<feature type="modified residue" description="Phosphoserine" evidence="2">
    <location>
        <position position="769"/>
    </location>
</feature>
<feature type="modified residue" description="Phosphoserine" evidence="2">
    <location>
        <position position="783"/>
    </location>
</feature>
<reference key="1">
    <citation type="journal article" date="2007" name="Proc. Natl. Acad. Sci. U.S.A.">
        <title>Genome sequencing and comparative analysis of Saccharomyces cerevisiae strain YJM789.</title>
        <authorList>
            <person name="Wei W."/>
            <person name="McCusker J.H."/>
            <person name="Hyman R.W."/>
            <person name="Jones T."/>
            <person name="Ning Y."/>
            <person name="Cao Z."/>
            <person name="Gu Z."/>
            <person name="Bruno D."/>
            <person name="Miranda M."/>
            <person name="Nguyen M."/>
            <person name="Wilhelmy J."/>
            <person name="Komp C."/>
            <person name="Tamse R."/>
            <person name="Wang X."/>
            <person name="Jia P."/>
            <person name="Luedi P."/>
            <person name="Oefner P.J."/>
            <person name="David L."/>
            <person name="Dietrich F.S."/>
            <person name="Li Y."/>
            <person name="Davis R.W."/>
            <person name="Steinmetz L.M."/>
        </authorList>
    </citation>
    <scope>NUCLEOTIDE SEQUENCE [LARGE SCALE GENOMIC DNA]</scope>
    <source>
        <strain>YJM789</strain>
    </source>
</reference>
<gene>
    <name evidence="2" type="primary">ATG1</name>
    <name evidence="6" type="ORF">SCY_1890</name>
</gene>
<sequence>MGDIKNKDHTTSVNHNLMASAGNYTAEKEIGKGSFATVYRGHLTSDKSQHVAIKEVSRAKLKNKKLLENLEIEIAILKKIKHPHIVGLIDCERTSTDFYLIMEYCALGDLTFLLKRRKELMENHPLLRTVFEKYPPPSENHNGLHRAFVLSYLQQLASALKFLRSKNLVHRDIKPQNLLLSTPLIGYHDSKSFHELGFVGIYNLPILKIADFGFARFLPNTSLAETLCGSPLYMAPEILNYQKYNAKADLWSVGTVVFEMCCGTPPFRASNHLELFKKIKRANDVITFPSYCNIEPELKELICSLLTFDPAQRIGFEEFFANKVVNEDLSSYELEDDLPELESKSKGIVESNMFVSEYLSKQPKSPNSNLAGHQSMADNPAELSDALKNSNILTAPAVKTDHTQAVDKKASNNKYHNSLVSDRSFEREYVVVEKKSVEVNSLADEVAQAGFNPNPIKHPTSTQNQNVLLNEQFSPNNQQYFQNQGENPRLLRATSSSSGGSDGSRRPSLVDRRLSISSLNPSNALSRALGIASTRLFGGANQQQQQQQITSSPPYSQTLLNSQLFHELTENIILRIDHLQHPETLKLDNTNIVSILESLAAKAFVVYSYAEVKFSQIVPLSTTLKGMANFENRRSMDSNAIAEEQDSDDAEEEDETLKKYKEDCLSTKTFGKGRTLSATSQLSATFNKLPRSEMILLCNEAIVLYMKALSILSKSMQVTSNWWYESQEKSCSLRVNVLVQWLREKFNECLEKADFLRLKINDLRFKHASEVAENQTLEEKGSSEEPVYLEKLLYDRALEISKMAAHMELKGENLYNCELAYATSLWMLETSLDDDDFTNAYGDYPFKTNIHLKSNDVEDKEKYHSVLDENDRIIIRKYIDSIANRLKILRQKMNHQN</sequence>
<proteinExistence type="inferred from homology"/>
<organism>
    <name type="scientific">Saccharomyces cerevisiae (strain YJM789)</name>
    <name type="common">Baker's yeast</name>
    <dbReference type="NCBI Taxonomy" id="307796"/>
    <lineage>
        <taxon>Eukaryota</taxon>
        <taxon>Fungi</taxon>
        <taxon>Dikarya</taxon>
        <taxon>Ascomycota</taxon>
        <taxon>Saccharomycotina</taxon>
        <taxon>Saccharomycetes</taxon>
        <taxon>Saccharomycetales</taxon>
        <taxon>Saccharomycetaceae</taxon>
        <taxon>Saccharomyces</taxon>
    </lineage>
</organism>
<evidence type="ECO:0000250" key="1"/>
<evidence type="ECO:0000250" key="2">
    <source>
        <dbReference type="UniProtKB" id="P53104"/>
    </source>
</evidence>
<evidence type="ECO:0000255" key="3">
    <source>
        <dbReference type="PROSITE-ProRule" id="PRU00159"/>
    </source>
</evidence>
<evidence type="ECO:0000255" key="4">
    <source>
        <dbReference type="PROSITE-ProRule" id="PRU10027"/>
    </source>
</evidence>
<evidence type="ECO:0000256" key="5">
    <source>
        <dbReference type="SAM" id="MobiDB-lite"/>
    </source>
</evidence>
<evidence type="ECO:0000303" key="6">
    <source>
    </source>
</evidence>